<feature type="chain" id="PRO_1000129110" description="Aspartate--ammonia ligase">
    <location>
        <begin position="1"/>
        <end position="327"/>
    </location>
</feature>
<sequence>MYQSLMTVRETQIAIKEVKTFFEDQLAKRLELFRVSAPLFVTKKSGLNDHLNGVERPIEFDMLHSGEELEIVHSLAKWKRFALHEYGYEAGEGLYTNMNAIRRDEELDATHSIYVDQWDWEKIVQKEWRTIDYLQKTVQTIYGIFKELEGHLFEKYPFLGKYLPEEIIFITSQELEDKYPELTPKDREHAIAKEHGAVFIIGIGDALRSGEKHDGRASDYDDWKLNGDILFWHPVLQASFELSSMGIRVDSKALDEQLTKTGEDFKREYDFHKGILEDVLPLTIGGGIGQSRMCMYFLRKAHIGEVQSSVWPDDLREACKKENIHLF</sequence>
<organism>
    <name type="scientific">Bacillus mycoides (strain KBAB4)</name>
    <name type="common">Bacillus weihenstephanensis</name>
    <dbReference type="NCBI Taxonomy" id="315730"/>
    <lineage>
        <taxon>Bacteria</taxon>
        <taxon>Bacillati</taxon>
        <taxon>Bacillota</taxon>
        <taxon>Bacilli</taxon>
        <taxon>Bacillales</taxon>
        <taxon>Bacillaceae</taxon>
        <taxon>Bacillus</taxon>
        <taxon>Bacillus cereus group</taxon>
    </lineage>
</organism>
<proteinExistence type="inferred from homology"/>
<dbReference type="EC" id="6.3.1.1" evidence="1"/>
<dbReference type="EMBL" id="CP000903">
    <property type="protein sequence ID" value="ABY42913.1"/>
    <property type="molecule type" value="Genomic_DNA"/>
</dbReference>
<dbReference type="RefSeq" id="WP_002031125.1">
    <property type="nucleotide sequence ID" value="NC_010184.1"/>
</dbReference>
<dbReference type="SMR" id="A9VPK1"/>
<dbReference type="KEGG" id="bwe:BcerKBAB4_1672"/>
<dbReference type="eggNOG" id="COG2502">
    <property type="taxonomic scope" value="Bacteria"/>
</dbReference>
<dbReference type="HOGENOM" id="CLU_071543_0_0_9"/>
<dbReference type="UniPathway" id="UPA00134">
    <property type="reaction ID" value="UER00194"/>
</dbReference>
<dbReference type="Proteomes" id="UP000002154">
    <property type="component" value="Chromosome"/>
</dbReference>
<dbReference type="GO" id="GO:0005829">
    <property type="term" value="C:cytosol"/>
    <property type="evidence" value="ECO:0007669"/>
    <property type="project" value="TreeGrafter"/>
</dbReference>
<dbReference type="GO" id="GO:0004071">
    <property type="term" value="F:aspartate-ammonia ligase activity"/>
    <property type="evidence" value="ECO:0007669"/>
    <property type="project" value="UniProtKB-UniRule"/>
</dbReference>
<dbReference type="GO" id="GO:0005524">
    <property type="term" value="F:ATP binding"/>
    <property type="evidence" value="ECO:0007669"/>
    <property type="project" value="UniProtKB-UniRule"/>
</dbReference>
<dbReference type="GO" id="GO:0140096">
    <property type="term" value="F:catalytic activity, acting on a protein"/>
    <property type="evidence" value="ECO:0007669"/>
    <property type="project" value="UniProtKB-ARBA"/>
</dbReference>
<dbReference type="GO" id="GO:0016740">
    <property type="term" value="F:transferase activity"/>
    <property type="evidence" value="ECO:0007669"/>
    <property type="project" value="UniProtKB-ARBA"/>
</dbReference>
<dbReference type="GO" id="GO:0070981">
    <property type="term" value="P:L-asparagine biosynthetic process"/>
    <property type="evidence" value="ECO:0007669"/>
    <property type="project" value="UniProtKB-UniRule"/>
</dbReference>
<dbReference type="CDD" id="cd00645">
    <property type="entry name" value="AsnA"/>
    <property type="match status" value="1"/>
</dbReference>
<dbReference type="Gene3D" id="3.30.930.10">
    <property type="entry name" value="Bira Bifunctional Protein, Domain 2"/>
    <property type="match status" value="1"/>
</dbReference>
<dbReference type="HAMAP" id="MF_00555">
    <property type="entry name" value="AsnA"/>
    <property type="match status" value="1"/>
</dbReference>
<dbReference type="InterPro" id="IPR006195">
    <property type="entry name" value="aa-tRNA-synth_II"/>
</dbReference>
<dbReference type="InterPro" id="IPR045864">
    <property type="entry name" value="aa-tRNA-synth_II/BPL/LPL"/>
</dbReference>
<dbReference type="InterPro" id="IPR004618">
    <property type="entry name" value="AsnA"/>
</dbReference>
<dbReference type="NCBIfam" id="TIGR00669">
    <property type="entry name" value="asnA"/>
    <property type="match status" value="1"/>
</dbReference>
<dbReference type="PANTHER" id="PTHR30073">
    <property type="entry name" value="ASPARTATE--AMMONIA LIGASE"/>
    <property type="match status" value="1"/>
</dbReference>
<dbReference type="PANTHER" id="PTHR30073:SF5">
    <property type="entry name" value="ASPARTATE--AMMONIA LIGASE"/>
    <property type="match status" value="1"/>
</dbReference>
<dbReference type="Pfam" id="PF03590">
    <property type="entry name" value="AsnA"/>
    <property type="match status" value="1"/>
</dbReference>
<dbReference type="PIRSF" id="PIRSF001555">
    <property type="entry name" value="Asp_ammon_ligase"/>
    <property type="match status" value="1"/>
</dbReference>
<dbReference type="SUPFAM" id="SSF55681">
    <property type="entry name" value="Class II aaRS and biotin synthetases"/>
    <property type="match status" value="1"/>
</dbReference>
<dbReference type="PROSITE" id="PS50862">
    <property type="entry name" value="AA_TRNA_LIGASE_II"/>
    <property type="match status" value="1"/>
</dbReference>
<reference key="1">
    <citation type="journal article" date="2008" name="Chem. Biol. Interact.">
        <title>Extending the Bacillus cereus group genomics to putative food-borne pathogens of different toxicity.</title>
        <authorList>
            <person name="Lapidus A."/>
            <person name="Goltsman E."/>
            <person name="Auger S."/>
            <person name="Galleron N."/>
            <person name="Segurens B."/>
            <person name="Dossat C."/>
            <person name="Land M.L."/>
            <person name="Broussolle V."/>
            <person name="Brillard J."/>
            <person name="Guinebretiere M.-H."/>
            <person name="Sanchis V."/>
            <person name="Nguen-the C."/>
            <person name="Lereclus D."/>
            <person name="Richardson P."/>
            <person name="Wincker P."/>
            <person name="Weissenbach J."/>
            <person name="Ehrlich S.D."/>
            <person name="Sorokin A."/>
        </authorList>
    </citation>
    <scope>NUCLEOTIDE SEQUENCE [LARGE SCALE GENOMIC DNA]</scope>
    <source>
        <strain>KBAB4</strain>
    </source>
</reference>
<comment type="catalytic activity">
    <reaction evidence="1">
        <text>L-aspartate + NH4(+) + ATP = L-asparagine + AMP + diphosphate + H(+)</text>
        <dbReference type="Rhea" id="RHEA:11372"/>
        <dbReference type="ChEBI" id="CHEBI:15378"/>
        <dbReference type="ChEBI" id="CHEBI:28938"/>
        <dbReference type="ChEBI" id="CHEBI:29991"/>
        <dbReference type="ChEBI" id="CHEBI:30616"/>
        <dbReference type="ChEBI" id="CHEBI:33019"/>
        <dbReference type="ChEBI" id="CHEBI:58048"/>
        <dbReference type="ChEBI" id="CHEBI:456215"/>
        <dbReference type="EC" id="6.3.1.1"/>
    </reaction>
</comment>
<comment type="pathway">
    <text evidence="1">Amino-acid biosynthesis; L-asparagine biosynthesis; L-asparagine from L-aspartate (ammonia route): step 1/1.</text>
</comment>
<comment type="subcellular location">
    <subcellularLocation>
        <location evidence="1">Cytoplasm</location>
    </subcellularLocation>
</comment>
<comment type="similarity">
    <text evidence="1">Belongs to the class-II aminoacyl-tRNA synthetase family. AsnA subfamily.</text>
</comment>
<protein>
    <recommendedName>
        <fullName evidence="1">Aspartate--ammonia ligase</fullName>
        <ecNumber evidence="1">6.3.1.1</ecNumber>
    </recommendedName>
    <alternativeName>
        <fullName evidence="1">Asparagine synthetase A</fullName>
    </alternativeName>
</protein>
<evidence type="ECO:0000255" key="1">
    <source>
        <dbReference type="HAMAP-Rule" id="MF_00555"/>
    </source>
</evidence>
<gene>
    <name evidence="1" type="primary">asnA</name>
    <name type="ordered locus">BcerKBAB4_1672</name>
</gene>
<name>ASNA_BACMK</name>
<accession>A9VPK1</accession>
<keyword id="KW-0028">Amino-acid biosynthesis</keyword>
<keyword id="KW-0061">Asparagine biosynthesis</keyword>
<keyword id="KW-0067">ATP-binding</keyword>
<keyword id="KW-0963">Cytoplasm</keyword>
<keyword id="KW-0436">Ligase</keyword>
<keyword id="KW-0547">Nucleotide-binding</keyword>